<accession>A9VLH6</accession>
<proteinExistence type="inferred from homology"/>
<sequence>MEIFPAIDLKEGRCVRLYQGEFSKETVMNEDPVAQAIIFEKLGAKILHVVDLDGAIVGESVNLPVIEKICKAVRIPVQIGGGVRSLAAVEKLLSVGVEKVILGTAALYDKSFLEEAVRLYKEQIIVGIDAKNGFVATRGWLDVSEISYIDLAKQMESVGVQTIVFTDISKDGTLAGPNFEQLELLQKSVGIRVIASGGVASIQQVKRLNDMNIYGVIIGKALYEKTIDLEKVLQVTKLC</sequence>
<dbReference type="EC" id="5.3.1.16" evidence="1"/>
<dbReference type="EMBL" id="CP000903">
    <property type="protein sequence ID" value="ABY42578.1"/>
    <property type="molecule type" value="Genomic_DNA"/>
</dbReference>
<dbReference type="RefSeq" id="WP_002140972.1">
    <property type="nucleotide sequence ID" value="NC_010184.1"/>
</dbReference>
<dbReference type="SMR" id="A9VLH6"/>
<dbReference type="KEGG" id="bwe:BcerKBAB4_1331"/>
<dbReference type="eggNOG" id="COG0106">
    <property type="taxonomic scope" value="Bacteria"/>
</dbReference>
<dbReference type="HOGENOM" id="CLU_048577_1_1_9"/>
<dbReference type="UniPathway" id="UPA00031">
    <property type="reaction ID" value="UER00009"/>
</dbReference>
<dbReference type="Proteomes" id="UP000002154">
    <property type="component" value="Chromosome"/>
</dbReference>
<dbReference type="GO" id="GO:0005737">
    <property type="term" value="C:cytoplasm"/>
    <property type="evidence" value="ECO:0007669"/>
    <property type="project" value="UniProtKB-SubCell"/>
</dbReference>
<dbReference type="GO" id="GO:0003949">
    <property type="term" value="F:1-(5-phosphoribosyl)-5-[(5-phosphoribosylamino)methylideneamino]imidazole-4-carboxamide isomerase activity"/>
    <property type="evidence" value="ECO:0007669"/>
    <property type="project" value="UniProtKB-UniRule"/>
</dbReference>
<dbReference type="GO" id="GO:0000105">
    <property type="term" value="P:L-histidine biosynthetic process"/>
    <property type="evidence" value="ECO:0007669"/>
    <property type="project" value="UniProtKB-UniRule"/>
</dbReference>
<dbReference type="GO" id="GO:0000162">
    <property type="term" value="P:L-tryptophan biosynthetic process"/>
    <property type="evidence" value="ECO:0007669"/>
    <property type="project" value="TreeGrafter"/>
</dbReference>
<dbReference type="CDD" id="cd04732">
    <property type="entry name" value="HisA"/>
    <property type="match status" value="1"/>
</dbReference>
<dbReference type="FunFam" id="3.20.20.70:FF:000009">
    <property type="entry name" value="1-(5-phosphoribosyl)-5-[(5-phosphoribosylamino)methylideneamino] imidazole-4-carboxamide isomerase"/>
    <property type="match status" value="1"/>
</dbReference>
<dbReference type="Gene3D" id="3.20.20.70">
    <property type="entry name" value="Aldolase class I"/>
    <property type="match status" value="1"/>
</dbReference>
<dbReference type="HAMAP" id="MF_01014">
    <property type="entry name" value="HisA"/>
    <property type="match status" value="1"/>
</dbReference>
<dbReference type="InterPro" id="IPR013785">
    <property type="entry name" value="Aldolase_TIM"/>
</dbReference>
<dbReference type="InterPro" id="IPR006062">
    <property type="entry name" value="His_biosynth"/>
</dbReference>
<dbReference type="InterPro" id="IPR006063">
    <property type="entry name" value="HisA_bact_arch"/>
</dbReference>
<dbReference type="InterPro" id="IPR044524">
    <property type="entry name" value="Isoase_HisA-like"/>
</dbReference>
<dbReference type="InterPro" id="IPR023016">
    <property type="entry name" value="Isoase_HisA-like_bact"/>
</dbReference>
<dbReference type="InterPro" id="IPR011060">
    <property type="entry name" value="RibuloseP-bd_barrel"/>
</dbReference>
<dbReference type="NCBIfam" id="TIGR00007">
    <property type="entry name" value="1-(5-phosphoribosyl)-5-[(5-phosphoribosylamino)methylideneamino]imidazole-4-carboxamide isomerase"/>
    <property type="match status" value="1"/>
</dbReference>
<dbReference type="PANTHER" id="PTHR43090">
    <property type="entry name" value="1-(5-PHOSPHORIBOSYL)-5-[(5-PHOSPHORIBOSYLAMINO)METHYLIDENEAMINO] IMIDAZOLE-4-CARBOXAMIDE ISOMERASE"/>
    <property type="match status" value="1"/>
</dbReference>
<dbReference type="PANTHER" id="PTHR43090:SF2">
    <property type="entry name" value="1-(5-PHOSPHORIBOSYL)-5-[(5-PHOSPHORIBOSYLAMINO)METHYLIDENEAMINO] IMIDAZOLE-4-CARBOXAMIDE ISOMERASE"/>
    <property type="match status" value="1"/>
</dbReference>
<dbReference type="Pfam" id="PF00977">
    <property type="entry name" value="His_biosynth"/>
    <property type="match status" value="1"/>
</dbReference>
<dbReference type="SUPFAM" id="SSF51366">
    <property type="entry name" value="Ribulose-phoshate binding barrel"/>
    <property type="match status" value="1"/>
</dbReference>
<evidence type="ECO:0000255" key="1">
    <source>
        <dbReference type="HAMAP-Rule" id="MF_01014"/>
    </source>
</evidence>
<comment type="catalytic activity">
    <reaction evidence="1">
        <text>1-(5-phospho-beta-D-ribosyl)-5-[(5-phospho-beta-D-ribosylamino)methylideneamino]imidazole-4-carboxamide = 5-[(5-phospho-1-deoxy-D-ribulos-1-ylimino)methylamino]-1-(5-phospho-beta-D-ribosyl)imidazole-4-carboxamide</text>
        <dbReference type="Rhea" id="RHEA:15469"/>
        <dbReference type="ChEBI" id="CHEBI:58435"/>
        <dbReference type="ChEBI" id="CHEBI:58525"/>
        <dbReference type="EC" id="5.3.1.16"/>
    </reaction>
</comment>
<comment type="pathway">
    <text evidence="1">Amino-acid biosynthesis; L-histidine biosynthesis; L-histidine from 5-phospho-alpha-D-ribose 1-diphosphate: step 4/9.</text>
</comment>
<comment type="subcellular location">
    <subcellularLocation>
        <location evidence="1">Cytoplasm</location>
    </subcellularLocation>
</comment>
<comment type="similarity">
    <text evidence="1">Belongs to the HisA/HisF family.</text>
</comment>
<feature type="chain" id="PRO_1000135082" description="1-(5-phosphoribosyl)-5-[(5-phosphoribosylamino)methylideneamino] imidazole-4-carboxamide isomerase">
    <location>
        <begin position="1"/>
        <end position="239"/>
    </location>
</feature>
<feature type="active site" description="Proton acceptor" evidence="1">
    <location>
        <position position="8"/>
    </location>
</feature>
<feature type="active site" description="Proton donor" evidence="1">
    <location>
        <position position="129"/>
    </location>
</feature>
<organism>
    <name type="scientific">Bacillus mycoides (strain KBAB4)</name>
    <name type="common">Bacillus weihenstephanensis</name>
    <dbReference type="NCBI Taxonomy" id="315730"/>
    <lineage>
        <taxon>Bacteria</taxon>
        <taxon>Bacillati</taxon>
        <taxon>Bacillota</taxon>
        <taxon>Bacilli</taxon>
        <taxon>Bacillales</taxon>
        <taxon>Bacillaceae</taxon>
        <taxon>Bacillus</taxon>
        <taxon>Bacillus cereus group</taxon>
    </lineage>
</organism>
<gene>
    <name evidence="1" type="primary">hisA</name>
    <name type="ordered locus">BcerKBAB4_1331</name>
</gene>
<keyword id="KW-0028">Amino-acid biosynthesis</keyword>
<keyword id="KW-0963">Cytoplasm</keyword>
<keyword id="KW-0368">Histidine biosynthesis</keyword>
<keyword id="KW-0413">Isomerase</keyword>
<reference key="1">
    <citation type="journal article" date="2008" name="Chem. Biol. Interact.">
        <title>Extending the Bacillus cereus group genomics to putative food-borne pathogens of different toxicity.</title>
        <authorList>
            <person name="Lapidus A."/>
            <person name="Goltsman E."/>
            <person name="Auger S."/>
            <person name="Galleron N."/>
            <person name="Segurens B."/>
            <person name="Dossat C."/>
            <person name="Land M.L."/>
            <person name="Broussolle V."/>
            <person name="Brillard J."/>
            <person name="Guinebretiere M.-H."/>
            <person name="Sanchis V."/>
            <person name="Nguen-the C."/>
            <person name="Lereclus D."/>
            <person name="Richardson P."/>
            <person name="Wincker P."/>
            <person name="Weissenbach J."/>
            <person name="Ehrlich S.D."/>
            <person name="Sorokin A."/>
        </authorList>
    </citation>
    <scope>NUCLEOTIDE SEQUENCE [LARGE SCALE GENOMIC DNA]</scope>
    <source>
        <strain>KBAB4</strain>
    </source>
</reference>
<protein>
    <recommendedName>
        <fullName evidence="1">1-(5-phosphoribosyl)-5-[(5-phosphoribosylamino)methylideneamino] imidazole-4-carboxamide isomerase</fullName>
        <ecNumber evidence="1">5.3.1.16</ecNumber>
    </recommendedName>
    <alternativeName>
        <fullName evidence="1">Phosphoribosylformimino-5-aminoimidazole carboxamide ribotide isomerase</fullName>
    </alternativeName>
</protein>
<name>HIS4_BACMK</name>